<name>RECG_STAAW</name>
<organism>
    <name type="scientific">Staphylococcus aureus (strain MW2)</name>
    <dbReference type="NCBI Taxonomy" id="196620"/>
    <lineage>
        <taxon>Bacteria</taxon>
        <taxon>Bacillati</taxon>
        <taxon>Bacillota</taxon>
        <taxon>Bacilli</taxon>
        <taxon>Bacillales</taxon>
        <taxon>Staphylococcaceae</taxon>
        <taxon>Staphylococcus</taxon>
    </lineage>
</organism>
<dbReference type="EC" id="5.6.2.4" evidence="1"/>
<dbReference type="EMBL" id="BA000033">
    <property type="protein sequence ID" value="BAB94975.1"/>
    <property type="molecule type" value="Genomic_DNA"/>
</dbReference>
<dbReference type="RefSeq" id="WP_001151517.1">
    <property type="nucleotide sequence ID" value="NC_003923.1"/>
</dbReference>
<dbReference type="SMR" id="Q8NX11"/>
<dbReference type="KEGG" id="sam:MW1110"/>
<dbReference type="HOGENOM" id="CLU_005122_7_1_9"/>
<dbReference type="GO" id="GO:0005524">
    <property type="term" value="F:ATP binding"/>
    <property type="evidence" value="ECO:0007669"/>
    <property type="project" value="UniProtKB-KW"/>
</dbReference>
<dbReference type="GO" id="GO:0016887">
    <property type="term" value="F:ATP hydrolysis activity"/>
    <property type="evidence" value="ECO:0007669"/>
    <property type="project" value="RHEA"/>
</dbReference>
<dbReference type="GO" id="GO:0003677">
    <property type="term" value="F:DNA binding"/>
    <property type="evidence" value="ECO:0007669"/>
    <property type="project" value="UniProtKB-KW"/>
</dbReference>
<dbReference type="GO" id="GO:0003678">
    <property type="term" value="F:DNA helicase activity"/>
    <property type="evidence" value="ECO:0007669"/>
    <property type="project" value="InterPro"/>
</dbReference>
<dbReference type="GO" id="GO:0006310">
    <property type="term" value="P:DNA recombination"/>
    <property type="evidence" value="ECO:0007669"/>
    <property type="project" value="UniProtKB-KW"/>
</dbReference>
<dbReference type="GO" id="GO:0006281">
    <property type="term" value="P:DNA repair"/>
    <property type="evidence" value="ECO:0007669"/>
    <property type="project" value="UniProtKB-KW"/>
</dbReference>
<dbReference type="CDD" id="cd17992">
    <property type="entry name" value="DEXHc_RecG"/>
    <property type="match status" value="1"/>
</dbReference>
<dbReference type="CDD" id="cd04488">
    <property type="entry name" value="RecG_wedge_OBF"/>
    <property type="match status" value="1"/>
</dbReference>
<dbReference type="Gene3D" id="2.40.50.140">
    <property type="entry name" value="Nucleic acid-binding proteins"/>
    <property type="match status" value="1"/>
</dbReference>
<dbReference type="Gene3D" id="3.40.50.300">
    <property type="entry name" value="P-loop containing nucleotide triphosphate hydrolases"/>
    <property type="match status" value="2"/>
</dbReference>
<dbReference type="InterPro" id="IPR004609">
    <property type="entry name" value="ATP-dep_DNA_helicase_RecG"/>
</dbReference>
<dbReference type="InterPro" id="IPR011545">
    <property type="entry name" value="DEAD/DEAH_box_helicase_dom"/>
</dbReference>
<dbReference type="InterPro" id="IPR014001">
    <property type="entry name" value="Helicase_ATP-bd"/>
</dbReference>
<dbReference type="InterPro" id="IPR001650">
    <property type="entry name" value="Helicase_C-like"/>
</dbReference>
<dbReference type="InterPro" id="IPR012340">
    <property type="entry name" value="NA-bd_OB-fold"/>
</dbReference>
<dbReference type="InterPro" id="IPR027417">
    <property type="entry name" value="P-loop_NTPase"/>
</dbReference>
<dbReference type="InterPro" id="IPR047112">
    <property type="entry name" value="RecG/Mfd"/>
</dbReference>
<dbReference type="InterPro" id="IPR045562">
    <property type="entry name" value="RecG_dom3_C"/>
</dbReference>
<dbReference type="InterPro" id="IPR033454">
    <property type="entry name" value="RecG_wedge"/>
</dbReference>
<dbReference type="NCBIfam" id="NF008165">
    <property type="entry name" value="PRK10917.1-3"/>
    <property type="match status" value="1"/>
</dbReference>
<dbReference type="NCBIfam" id="NF008168">
    <property type="entry name" value="PRK10917.2-2"/>
    <property type="match status" value="1"/>
</dbReference>
<dbReference type="NCBIfam" id="TIGR00643">
    <property type="entry name" value="recG"/>
    <property type="match status" value="1"/>
</dbReference>
<dbReference type="PANTHER" id="PTHR47964">
    <property type="entry name" value="ATP-DEPENDENT DNA HELICASE HOMOLOG RECG, CHLOROPLASTIC"/>
    <property type="match status" value="1"/>
</dbReference>
<dbReference type="PANTHER" id="PTHR47964:SF1">
    <property type="entry name" value="ATP-DEPENDENT DNA HELICASE HOMOLOG RECG, CHLOROPLASTIC"/>
    <property type="match status" value="1"/>
</dbReference>
<dbReference type="Pfam" id="PF00270">
    <property type="entry name" value="DEAD"/>
    <property type="match status" value="1"/>
</dbReference>
<dbReference type="Pfam" id="PF00271">
    <property type="entry name" value="Helicase_C"/>
    <property type="match status" value="1"/>
</dbReference>
<dbReference type="Pfam" id="PF19833">
    <property type="entry name" value="RecG_dom3_C"/>
    <property type="match status" value="1"/>
</dbReference>
<dbReference type="Pfam" id="PF17191">
    <property type="entry name" value="RecG_wedge"/>
    <property type="match status" value="1"/>
</dbReference>
<dbReference type="SMART" id="SM00487">
    <property type="entry name" value="DEXDc"/>
    <property type="match status" value="1"/>
</dbReference>
<dbReference type="SMART" id="SM00490">
    <property type="entry name" value="HELICc"/>
    <property type="match status" value="1"/>
</dbReference>
<dbReference type="SUPFAM" id="SSF50249">
    <property type="entry name" value="Nucleic acid-binding proteins"/>
    <property type="match status" value="1"/>
</dbReference>
<dbReference type="SUPFAM" id="SSF52540">
    <property type="entry name" value="P-loop containing nucleoside triphosphate hydrolases"/>
    <property type="match status" value="2"/>
</dbReference>
<dbReference type="PROSITE" id="PS51192">
    <property type="entry name" value="HELICASE_ATP_BIND_1"/>
    <property type="match status" value="1"/>
</dbReference>
<dbReference type="PROSITE" id="PS51194">
    <property type="entry name" value="HELICASE_CTER"/>
    <property type="match status" value="1"/>
</dbReference>
<feature type="chain" id="PRO_0000102155" description="ATP-dependent DNA helicase RecG">
    <location>
        <begin position="1"/>
        <end position="686"/>
    </location>
</feature>
<feature type="domain" description="Helicase ATP-binding" evidence="3">
    <location>
        <begin position="279"/>
        <end position="439"/>
    </location>
</feature>
<feature type="domain" description="Helicase C-terminal" evidence="4">
    <location>
        <begin position="462"/>
        <end position="618"/>
    </location>
</feature>
<feature type="region of interest" description="Wedge domain" evidence="2">
    <location>
        <begin position="50"/>
        <end position="149"/>
    </location>
</feature>
<feature type="short sequence motif" description="DEAH box" evidence="3">
    <location>
        <begin position="392"/>
        <end position="395"/>
    </location>
</feature>
<feature type="binding site" evidence="3">
    <location>
        <begin position="292"/>
        <end position="299"/>
    </location>
    <ligand>
        <name>ATP</name>
        <dbReference type="ChEBI" id="CHEBI:30616"/>
    </ligand>
</feature>
<protein>
    <recommendedName>
        <fullName>ATP-dependent DNA helicase RecG</fullName>
        <ecNumber evidence="1">5.6.2.4</ecNumber>
    </recommendedName>
    <alternativeName>
        <fullName>DNA branch migration protein RecG</fullName>
    </alternativeName>
    <alternativeName>
        <fullName>Probable DNA 3'-5' helicase RecG</fullName>
    </alternativeName>
</protein>
<accession>Q8NX11</accession>
<comment type="function">
    <text evidence="1">Plays a critical role in recombination and DNA repair. Helps process Holliday junction intermediates to mature products by catalyzing branch migration. Has replication fork regression activity, unwinds stalled or blocked replication forks to make a HJ that can be resolved. Has a DNA unwinding activity characteristic of a DNA helicase with 3'-5' polarity (By similarity).</text>
</comment>
<comment type="catalytic activity">
    <reaction evidence="1">
        <text>Couples ATP hydrolysis with the unwinding of duplex DNA by translocating in the 3'-5' direction.</text>
        <dbReference type="EC" id="5.6.2.4"/>
    </reaction>
</comment>
<comment type="catalytic activity">
    <reaction evidence="1">
        <text>ATP + H2O = ADP + phosphate + H(+)</text>
        <dbReference type="Rhea" id="RHEA:13065"/>
        <dbReference type="ChEBI" id="CHEBI:15377"/>
        <dbReference type="ChEBI" id="CHEBI:15378"/>
        <dbReference type="ChEBI" id="CHEBI:30616"/>
        <dbReference type="ChEBI" id="CHEBI:43474"/>
        <dbReference type="ChEBI" id="CHEBI:456216"/>
        <dbReference type="EC" id="5.6.2.4"/>
    </reaction>
</comment>
<comment type="subunit">
    <text evidence="2">Monomer (By similarity).</text>
</comment>
<comment type="domain">
    <text evidence="2">The wedge domain within the N-terminus inserts into the replication fork junction, where the lagging and leading strand split (By similarity).</text>
</comment>
<comment type="similarity">
    <text evidence="5">Belongs to the helicase family. RecG subfamily.</text>
</comment>
<evidence type="ECO:0000250" key="1">
    <source>
        <dbReference type="UniProtKB" id="P24230"/>
    </source>
</evidence>
<evidence type="ECO:0000250" key="2">
    <source>
        <dbReference type="UniProtKB" id="Q9WY48"/>
    </source>
</evidence>
<evidence type="ECO:0000255" key="3">
    <source>
        <dbReference type="PROSITE-ProRule" id="PRU00541"/>
    </source>
</evidence>
<evidence type="ECO:0000255" key="4">
    <source>
        <dbReference type="PROSITE-ProRule" id="PRU00542"/>
    </source>
</evidence>
<evidence type="ECO:0000305" key="5"/>
<sequence>MAKVNLIESPYSLLQLKGIGPKKIEVLQQLNIHTVEDLVLYLPTRYEDNTVIDLNQAEDQSNVTIEGQVYTAPVVAFFGRNNSKLTVHLMVNNIAVKCIFFNQPYLKKKIELNQTITVKGKWNRVKQEITGNRVFFNSQGTQTQENADVQLEPVYRIKEGIKQKQIRDQIRQALNDVTIHEWLTDELREKYKLETLDFTLNTLHHPKSKEDLLRARRTYAFTELFLFELRMQWLNRLEKSSDEAIEIDYGLDQVKSFIDRLPFELTEAQKSSVNEIFRDLKAPIRMHRLLQGDVGSGKTVVAAICMYALKTAGYQSALMVPTEILAEQHAESLMALFGDSMNVALLTGSVKGKKRKILLEQLENGTIDCLIGTHALIQDDVIFHNVGLVITDEQHRFGVNQRQLLREKGAMTNVLFMTATPIPRTLAISVFGEMDVSSIKQLPKGRKPIITTWAKHEQYDKVLMQMTSELKKGRQAYVICPLIESSEHLEDVQNVVALYESLQQYYGVSRVGLLHGKLSADEKDEVMQKFSNHEIDVLVSTTVVEVGVNVPNATFMMIYDADRFGLSTLHQLRGRVGRSDQQSYCVLIASPKTETGIERMTIMTQTTDGFELSERDLEMRGPGDFFGVKQSGLPDFLVANLVEDYRMLEVARDEAAELIQSGVFFENTYQHLRHFVEENLLHRSFD</sequence>
<proteinExistence type="inferred from homology"/>
<gene>
    <name type="primary">recG</name>
    <name type="ordered locus">MW1110</name>
</gene>
<reference key="1">
    <citation type="journal article" date="2002" name="Lancet">
        <title>Genome and virulence determinants of high virulence community-acquired MRSA.</title>
        <authorList>
            <person name="Baba T."/>
            <person name="Takeuchi F."/>
            <person name="Kuroda M."/>
            <person name="Yuzawa H."/>
            <person name="Aoki K."/>
            <person name="Oguchi A."/>
            <person name="Nagai Y."/>
            <person name="Iwama N."/>
            <person name="Asano K."/>
            <person name="Naimi T."/>
            <person name="Kuroda H."/>
            <person name="Cui L."/>
            <person name="Yamamoto K."/>
            <person name="Hiramatsu K."/>
        </authorList>
    </citation>
    <scope>NUCLEOTIDE SEQUENCE [LARGE SCALE GENOMIC DNA]</scope>
    <source>
        <strain>MW2</strain>
    </source>
</reference>
<keyword id="KW-0067">ATP-binding</keyword>
<keyword id="KW-0227">DNA damage</keyword>
<keyword id="KW-0233">DNA recombination</keyword>
<keyword id="KW-0234">DNA repair</keyword>
<keyword id="KW-0238">DNA-binding</keyword>
<keyword id="KW-0347">Helicase</keyword>
<keyword id="KW-0378">Hydrolase</keyword>
<keyword id="KW-0413">Isomerase</keyword>
<keyword id="KW-0547">Nucleotide-binding</keyword>